<protein>
    <recommendedName>
        <fullName evidence="1">Regulatory protein ViaA</fullName>
    </recommendedName>
    <alternativeName>
        <fullName evidence="1">VWA interacting with AAA+ ATPase</fullName>
    </alternativeName>
</protein>
<organism>
    <name type="scientific">Shigella boydii serotype 18 (strain CDC 3083-94 / BS512)</name>
    <dbReference type="NCBI Taxonomy" id="344609"/>
    <lineage>
        <taxon>Bacteria</taxon>
        <taxon>Pseudomonadati</taxon>
        <taxon>Pseudomonadota</taxon>
        <taxon>Gammaproteobacteria</taxon>
        <taxon>Enterobacterales</taxon>
        <taxon>Enterobacteriaceae</taxon>
        <taxon>Shigella</taxon>
    </lineage>
</organism>
<sequence length="483" mass="55877">MLTLDTLNVMLAVSEEGLIEEMIIALLASPQLAVFFEKFPRLKAAITDDVPRWREALRSRLKDARVPPELTEEVMCYQQSQLLSTPQFIVQLPQILDLLHRLNSPWAEQARQLVDANSTITSALHTLFLQRWRLSLIVQATTLNQQLLEEEREQLLSEVQERMTLSGQLEPILADNNTAAGRLWDMSAGQLKRGDYQLIVKYGEFLNEQPELKRLAEQLGRSREAKSIPRNDAQMETFRTMVREPATVPEQVDGLQQSDDILRLLPPELATLGITELEYEFYRRLVEKQLLTYRLHGESWREKVIERPVVHKDYDEQPRGPFIVCVDASGSMGGFNEQCAKAFCLALMRIALAENRRCYIMLFSTEIVRYELSGPQGIEQAIRFLSQQFRGGTDLASCFRAIMERLQSREWFDADAVVISDFIAQRLPDDVTSKVKELQRVHQHRFHAVAMSAHGKPGIMRIFDHIWRFDTGMRSRLLRRWRR</sequence>
<dbReference type="EMBL" id="CP001063">
    <property type="protein sequence ID" value="ACD06428.1"/>
    <property type="molecule type" value="Genomic_DNA"/>
</dbReference>
<dbReference type="RefSeq" id="WP_000956638.1">
    <property type="nucleotide sequence ID" value="NC_010658.1"/>
</dbReference>
<dbReference type="SMR" id="B2TUN0"/>
<dbReference type="STRING" id="344609.SbBS512_E4176"/>
<dbReference type="KEGG" id="sbc:SbBS512_E4176"/>
<dbReference type="HOGENOM" id="CLU_022130_0_0_6"/>
<dbReference type="Proteomes" id="UP000001030">
    <property type="component" value="Chromosome"/>
</dbReference>
<dbReference type="GO" id="GO:0005829">
    <property type="term" value="C:cytosol"/>
    <property type="evidence" value="ECO:0007669"/>
    <property type="project" value="TreeGrafter"/>
</dbReference>
<dbReference type="CDD" id="cd01462">
    <property type="entry name" value="VWA_YIEM_type"/>
    <property type="match status" value="1"/>
</dbReference>
<dbReference type="Gene3D" id="3.40.50.410">
    <property type="entry name" value="von Willebrand factor, type A domain"/>
    <property type="match status" value="1"/>
</dbReference>
<dbReference type="HAMAP" id="MF_01626">
    <property type="entry name" value="ViaA"/>
    <property type="match status" value="1"/>
</dbReference>
<dbReference type="InterPro" id="IPR008912">
    <property type="entry name" value="Uncharacterised_CoxE"/>
</dbReference>
<dbReference type="InterPro" id="IPR023481">
    <property type="entry name" value="Uncharacterised_ViaA"/>
</dbReference>
<dbReference type="InterPro" id="IPR002035">
    <property type="entry name" value="VWF_A"/>
</dbReference>
<dbReference type="InterPro" id="IPR036465">
    <property type="entry name" value="vWFA_dom_sf"/>
</dbReference>
<dbReference type="NCBIfam" id="NF008230">
    <property type="entry name" value="PRK10997.1"/>
    <property type="match status" value="1"/>
</dbReference>
<dbReference type="PANTHER" id="PTHR36846">
    <property type="entry name" value="PROTEIN VIAA"/>
    <property type="match status" value="1"/>
</dbReference>
<dbReference type="PANTHER" id="PTHR36846:SF1">
    <property type="entry name" value="PROTEIN VIAA"/>
    <property type="match status" value="1"/>
</dbReference>
<dbReference type="Pfam" id="PF05762">
    <property type="entry name" value="VWA_CoxE"/>
    <property type="match status" value="1"/>
</dbReference>
<dbReference type="SMART" id="SM00327">
    <property type="entry name" value="VWA"/>
    <property type="match status" value="1"/>
</dbReference>
<dbReference type="SUPFAM" id="SSF53300">
    <property type="entry name" value="vWA-like"/>
    <property type="match status" value="1"/>
</dbReference>
<keyword id="KW-0143">Chaperone</keyword>
<keyword id="KW-0963">Cytoplasm</keyword>
<keyword id="KW-1185">Reference proteome</keyword>
<comment type="function">
    <text evidence="1">Component of the RavA-ViaA chaperone complex, which may act on the membrane to optimize the function of some of the respiratory chains. ViaA stimulates the ATPase activity of RavA.</text>
</comment>
<comment type="subunit">
    <text evidence="1">Homodimer. Interacts with RavA.</text>
</comment>
<comment type="subcellular location">
    <subcellularLocation>
        <location evidence="1">Cytoplasm</location>
    </subcellularLocation>
</comment>
<comment type="similarity">
    <text evidence="1">Belongs to the ViaA family.</text>
</comment>
<name>VIAA_SHIB3</name>
<accession>B2TUN0</accession>
<proteinExistence type="inferred from homology"/>
<gene>
    <name evidence="1" type="primary">viaA</name>
    <name type="ordered locus">SbBS512_E4176</name>
</gene>
<evidence type="ECO:0000255" key="1">
    <source>
        <dbReference type="HAMAP-Rule" id="MF_01626"/>
    </source>
</evidence>
<feature type="chain" id="PRO_1000186163" description="Regulatory protein ViaA">
    <location>
        <begin position="1"/>
        <end position="483"/>
    </location>
</feature>
<reference key="1">
    <citation type="submission" date="2008-05" db="EMBL/GenBank/DDBJ databases">
        <title>Complete sequence of Shigella boydii serotype 18 strain BS512.</title>
        <authorList>
            <person name="Rasko D.A."/>
            <person name="Rosovitz M."/>
            <person name="Maurelli A.T."/>
            <person name="Myers G."/>
            <person name="Seshadri R."/>
            <person name="Cer R."/>
            <person name="Jiang L."/>
            <person name="Ravel J."/>
            <person name="Sebastian Y."/>
        </authorList>
    </citation>
    <scope>NUCLEOTIDE SEQUENCE [LARGE SCALE GENOMIC DNA]</scope>
    <source>
        <strain>CDC 3083-94 / BS512</strain>
    </source>
</reference>